<feature type="chain" id="PRO_0000279395" description="DNA-directed primase/polymerase protein">
    <location>
        <begin position="1"/>
        <end position="560"/>
    </location>
</feature>
<feature type="region of interest" description="Disordered" evidence="3">
    <location>
        <begin position="203"/>
        <end position="223"/>
    </location>
</feature>
<feature type="region of interest" description="Disordered" evidence="3">
    <location>
        <begin position="480"/>
        <end position="507"/>
    </location>
</feature>
<feature type="region of interest" description="Interaction with RPA1" evidence="5">
    <location>
        <begin position="481"/>
        <end position="560"/>
    </location>
</feature>
<feature type="coiled-coil region" evidence="2">
    <location>
        <begin position="1"/>
        <end position="22"/>
    </location>
</feature>
<feature type="short sequence motif" description="Zinc knuckle motif" evidence="7">
    <location>
        <begin position="419"/>
        <end position="452"/>
    </location>
</feature>
<feature type="short sequence motif" description="RPA1-binding motif 1" evidence="19">
    <location>
        <begin position="513"/>
        <end position="527"/>
    </location>
</feature>
<feature type="short sequence motif" description="RPA1-binding motif 2" evidence="19">
    <location>
        <begin position="548"/>
        <end position="556"/>
    </location>
</feature>
<feature type="compositionally biased region" description="Polar residues" evidence="3">
    <location>
        <begin position="490"/>
        <end position="507"/>
    </location>
</feature>
<feature type="binding site" evidence="16 36">
    <location>
        <position position="76"/>
    </location>
    <ligand>
        <name>substrate</name>
    </ligand>
</feature>
<feature type="binding site" evidence="16 36">
    <location>
        <begin position="114"/>
        <end position="116"/>
    </location>
    <ligand>
        <name>substrate</name>
    </ligand>
</feature>
<feature type="binding site" evidence="30 34 36">
    <location>
        <position position="114"/>
    </location>
    <ligand>
        <name>Mn(2+)</name>
        <dbReference type="ChEBI" id="CHEBI:29035"/>
        <note>catalytic</note>
    </ligand>
</feature>
<feature type="binding site" evidence="34 36">
    <location>
        <position position="116"/>
    </location>
    <ligand>
        <name>Mn(2+)</name>
        <dbReference type="ChEBI" id="CHEBI:29035"/>
        <note>catalytic</note>
    </ligand>
</feature>
<feature type="binding site" evidence="16 36">
    <location>
        <begin position="165"/>
        <end position="169"/>
    </location>
    <ligand>
        <name>substrate</name>
    </ligand>
</feature>
<feature type="binding site" evidence="16 36">
    <location>
        <begin position="288"/>
        <end position="291"/>
    </location>
    <ligand>
        <name>substrate</name>
    </ligand>
</feature>
<feature type="binding site" evidence="16 36">
    <location>
        <position position="297"/>
    </location>
    <ligand>
        <name>substrate</name>
    </ligand>
</feature>
<feature type="binding site" evidence="32">
    <location>
        <position position="419"/>
    </location>
    <ligand>
        <name>Zn(2+)</name>
        <dbReference type="ChEBI" id="CHEBI:29105"/>
    </ligand>
</feature>
<feature type="binding site" evidence="32">
    <location>
        <position position="426"/>
    </location>
    <ligand>
        <name>Zn(2+)</name>
        <dbReference type="ChEBI" id="CHEBI:29105"/>
    </ligand>
</feature>
<feature type="binding site" evidence="32">
    <location>
        <position position="446"/>
    </location>
    <ligand>
        <name>Zn(2+)</name>
        <dbReference type="ChEBI" id="CHEBI:29105"/>
    </ligand>
</feature>
<feature type="binding site" evidence="32">
    <location>
        <position position="451"/>
    </location>
    <ligand>
        <name>Zn(2+)</name>
        <dbReference type="ChEBI" id="CHEBI:29105"/>
    </ligand>
</feature>
<feature type="modified residue" description="Phosphoserine" evidence="39 40">
    <location>
        <position position="255"/>
    </location>
</feature>
<feature type="splice variant" id="VSP_053600" description="In isoform 2." evidence="26">
    <location>
        <position position="366"/>
    </location>
</feature>
<feature type="sequence variant" id="VAR_070120" description="In MYP22; reduced DNA polymerase and DNA primase activities; reduced DNA-binding; dbSNP:rs200857997." evidence="4 11">
    <original>Y</original>
    <variation>D</variation>
    <location>
        <position position="89"/>
    </location>
</feature>
<feature type="sequence variant" id="VAR_030878" description="In dbSNP:rs2463447.">
    <original>R</original>
    <variation>Q</variation>
    <location>
        <position position="168"/>
    </location>
</feature>
<feature type="sequence variant" id="VAR_030879" description="In dbSNP:rs14969.">
    <original>T</original>
    <variation>K</variation>
    <location>
        <position position="505"/>
    </location>
</feature>
<feature type="mutagenesis site" description="Does not affect DNA primase activity." evidence="11">
    <original>Y</original>
    <variation>F</variation>
    <location>
        <position position="89"/>
    </location>
</feature>
<feature type="mutagenesis site" description="Reduced DNA primase activity." evidence="11">
    <original>Y</original>
    <variation>S</variation>
    <location>
        <position position="89"/>
    </location>
</feature>
<feature type="mutagenesis site" description="In AxA; abolished DNA primase and polymerase activities." evidence="6 8 9 14 20 21 24">
    <original>DLE</original>
    <variation>ALA</variation>
    <location>
        <begin position="114"/>
        <end position="116"/>
    </location>
</feature>
<feature type="mutagenesis site" description="Abolishes DNA primase and polymerase activities." evidence="5">
    <original>D</original>
    <variation>A</variation>
    <location>
        <position position="114"/>
    </location>
</feature>
<feature type="mutagenesis site" description="Abolishes DNA primase and polymerase activities." evidence="5">
    <original>H</original>
    <variation>N</variation>
    <location>
        <position position="169"/>
    </location>
</feature>
<feature type="mutagenesis site" description="Abolished Mn(2+) DNA primase activity." evidence="24">
    <original>D</original>
    <variation>A</variation>
    <location>
        <position position="280"/>
    </location>
</feature>
<feature type="mutagenesis site" description="Abolished zinc-binding, leading to altered translesion synthesis; when associated with A-426." evidence="9 14 21">
    <original>C</original>
    <variation>A</variation>
    <location>
        <position position="419"/>
    </location>
</feature>
<feature type="mutagenesis site" description="In mutant CH; abolished DNA primase activity and impaired ability to restart stalled forks; when associated with Y-426." evidence="7">
    <original>C</original>
    <variation>G</variation>
    <location>
        <position position="419"/>
    </location>
</feature>
<feature type="mutagenesis site" description="Abolished zinc-binding, leading to altered translesion synthesis; when associated with A-419." evidence="9 14 21">
    <original>H</original>
    <variation>A</variation>
    <location>
        <position position="426"/>
    </location>
</feature>
<feature type="mutagenesis site" description="Abolishes DNA primase activity, while it increases DNA polymerase activity." evidence="5 7">
    <original>H</original>
    <variation>D</variation>
    <location>
        <position position="426"/>
    </location>
</feature>
<feature type="mutagenesis site" description="In mutant CH; abolished DNA primase activity and impaired ability to restart stalled forks; when associated with G-419." evidence="5 7">
    <original>H</original>
    <variation>Y</variation>
    <location>
        <position position="426"/>
    </location>
</feature>
<feature type="mutagenesis site" description="Abolished interaction with RPA1, impairing recruitment to chromatin and reducing DNA primase activity; when associated with 551-R--A-554." evidence="19">
    <original>DAYF</original>
    <variation>RAYA</variation>
    <location>
        <begin position="519"/>
        <end position="522"/>
    </location>
</feature>
<feature type="mutagenesis site" description="Abolished interaction with RPA1, impairing recruitment to chromatin and reducing DNA primase activity; when associated with 519-R--A-522." evidence="19">
    <original>DELI</original>
    <variation>RELA</variation>
    <location>
        <begin position="551"/>
        <end position="554"/>
    </location>
</feature>
<feature type="sequence conflict" description="In Ref. 2; CAI46079." evidence="29" ref="2">
    <original>D</original>
    <variation>G</variation>
    <location>
        <position position="322"/>
    </location>
</feature>
<feature type="helix" evidence="45">
    <location>
        <begin position="2"/>
        <end position="13"/>
    </location>
</feature>
<feature type="strand" evidence="45">
    <location>
        <begin position="43"/>
        <end position="47"/>
    </location>
</feature>
<feature type="helix" evidence="45">
    <location>
        <begin position="48"/>
        <end position="57"/>
    </location>
</feature>
<feature type="strand" evidence="45">
    <location>
        <begin position="63"/>
        <end position="68"/>
    </location>
</feature>
<feature type="strand" evidence="45">
    <location>
        <begin position="70"/>
        <end position="73"/>
    </location>
</feature>
<feature type="strand" evidence="45">
    <location>
        <begin position="76"/>
        <end position="81"/>
    </location>
</feature>
<feature type="helix" evidence="45">
    <location>
        <begin position="83"/>
        <end position="90"/>
    </location>
</feature>
<feature type="strand" evidence="45">
    <location>
        <begin position="93"/>
        <end position="96"/>
    </location>
</feature>
<feature type="strand" evidence="45">
    <location>
        <begin position="98"/>
        <end position="102"/>
    </location>
</feature>
<feature type="strand" evidence="45">
    <location>
        <begin position="112"/>
        <end position="118"/>
    </location>
</feature>
<feature type="turn" evidence="45">
    <location>
        <begin position="119"/>
        <end position="121"/>
    </location>
</feature>
<feature type="helix" evidence="45">
    <location>
        <begin position="127"/>
        <end position="146"/>
    </location>
</feature>
<feature type="helix" evidence="45">
    <location>
        <begin position="152"/>
        <end position="154"/>
    </location>
</feature>
<feature type="strand" evidence="45">
    <location>
        <begin position="155"/>
        <end position="159"/>
    </location>
</feature>
<feature type="strand" evidence="45">
    <location>
        <begin position="163"/>
        <end position="172"/>
    </location>
</feature>
<feature type="strand" evidence="45">
    <location>
        <begin position="177"/>
        <end position="180"/>
    </location>
</feature>
<feature type="helix" evidence="45">
    <location>
        <begin position="182"/>
        <end position="192"/>
    </location>
</feature>
<feature type="helix" evidence="45">
    <location>
        <begin position="194"/>
        <end position="199"/>
    </location>
</feature>
<feature type="helix" evidence="45">
    <location>
        <begin position="264"/>
        <end position="266"/>
    </location>
</feature>
<feature type="strand" evidence="45">
    <location>
        <begin position="267"/>
        <end position="269"/>
    </location>
</feature>
<feature type="strand" evidence="45">
    <location>
        <begin position="275"/>
        <end position="279"/>
    </location>
</feature>
<feature type="helix" evidence="44">
    <location>
        <begin position="281"/>
        <end position="283"/>
    </location>
</feature>
<feature type="strand" evidence="45">
    <location>
        <begin position="289"/>
        <end position="291"/>
    </location>
</feature>
<feature type="strand" evidence="43">
    <location>
        <begin position="298"/>
        <end position="300"/>
    </location>
</feature>
<feature type="strand" evidence="45">
    <location>
        <begin position="304"/>
        <end position="306"/>
    </location>
</feature>
<feature type="helix" evidence="45">
    <location>
        <begin position="322"/>
        <end position="330"/>
    </location>
</feature>
<feature type="strand" evidence="45">
    <location>
        <begin position="342"/>
        <end position="344"/>
    </location>
</feature>
<feature type="helix" evidence="41">
    <location>
        <begin position="519"/>
        <end position="521"/>
    </location>
</feature>
<feature type="helix" evidence="42">
    <location>
        <begin position="551"/>
        <end position="554"/>
    </location>
</feature>
<sequence>MNRKWEAKLKQIEERASHYERKPLSSVYRPRLSKPEEPPSIWRLFHRQAQAFNFVKSCKEDVHVFALECKVGDGQRIYLVTTYAEFWFYYKSRKNLLHCYEVIPENAVCKLYFDLEFNKPANPGADGKKMVALLIEYVCKALQELYGVNCSAEDVLNLDSSTDEKFSRHLIFQLHDVAFKDNIHVGNFLRKILQPALDLLGSEDDDSAPETTGHGFPHFSEAPARQGFSFNKMFTEKATEESWTSNSKKLERLGSAEQSSPDLSFLVVKNNMGEKHLFVDLGVYTRNRNFRLYKSSKIGKRVALEVTEDNKFFPIQSKDVSDEYQYFLSSLVSNVRFSDTLRILTCEPSQNKQKGVGYFNSIGTSVETIEGFQCSPYPEVDHFVLSLVNKDGIKGGIRRWNYFFPEELLVYDICKYRWCENIGRAHKSNNIMILVDLKNEVWYQKCHDPVCKAENFKSDCFPLPAEVCLLFLFKEEEEFTTDEADETRSNETQNPHKPSPSRLSTGASADAVWDNGIDDAYFLEATEDAELAEAAENSLLSYNSEVDEIPDELIIEVLQE</sequence>
<reference key="1">
    <citation type="journal article" date="2004" name="Nat. Genet.">
        <title>Complete sequencing and characterization of 21,243 full-length human cDNAs.</title>
        <authorList>
            <person name="Ota T."/>
            <person name="Suzuki Y."/>
            <person name="Nishikawa T."/>
            <person name="Otsuki T."/>
            <person name="Sugiyama T."/>
            <person name="Irie R."/>
            <person name="Wakamatsu A."/>
            <person name="Hayashi K."/>
            <person name="Sato H."/>
            <person name="Nagai K."/>
            <person name="Kimura K."/>
            <person name="Makita H."/>
            <person name="Sekine M."/>
            <person name="Obayashi M."/>
            <person name="Nishi T."/>
            <person name="Shibahara T."/>
            <person name="Tanaka T."/>
            <person name="Ishii S."/>
            <person name="Yamamoto J."/>
            <person name="Saito K."/>
            <person name="Kawai Y."/>
            <person name="Isono Y."/>
            <person name="Nakamura Y."/>
            <person name="Nagahari K."/>
            <person name="Murakami K."/>
            <person name="Yasuda T."/>
            <person name="Iwayanagi T."/>
            <person name="Wagatsuma M."/>
            <person name="Shiratori A."/>
            <person name="Sudo H."/>
            <person name="Hosoiri T."/>
            <person name="Kaku Y."/>
            <person name="Kodaira H."/>
            <person name="Kondo H."/>
            <person name="Sugawara M."/>
            <person name="Takahashi M."/>
            <person name="Kanda K."/>
            <person name="Yokoi T."/>
            <person name="Furuya T."/>
            <person name="Kikkawa E."/>
            <person name="Omura Y."/>
            <person name="Abe K."/>
            <person name="Kamihara K."/>
            <person name="Katsuta N."/>
            <person name="Sato K."/>
            <person name="Tanikawa M."/>
            <person name="Yamazaki M."/>
            <person name="Ninomiya K."/>
            <person name="Ishibashi T."/>
            <person name="Yamashita H."/>
            <person name="Murakawa K."/>
            <person name="Fujimori K."/>
            <person name="Tanai H."/>
            <person name="Kimata M."/>
            <person name="Watanabe M."/>
            <person name="Hiraoka S."/>
            <person name="Chiba Y."/>
            <person name="Ishida S."/>
            <person name="Ono Y."/>
            <person name="Takiguchi S."/>
            <person name="Watanabe S."/>
            <person name="Yosida M."/>
            <person name="Hotuta T."/>
            <person name="Kusano J."/>
            <person name="Kanehori K."/>
            <person name="Takahashi-Fujii A."/>
            <person name="Hara H."/>
            <person name="Tanase T.-O."/>
            <person name="Nomura Y."/>
            <person name="Togiya S."/>
            <person name="Komai F."/>
            <person name="Hara R."/>
            <person name="Takeuchi K."/>
            <person name="Arita M."/>
            <person name="Imose N."/>
            <person name="Musashino K."/>
            <person name="Yuuki H."/>
            <person name="Oshima A."/>
            <person name="Sasaki N."/>
            <person name="Aotsuka S."/>
            <person name="Yoshikawa Y."/>
            <person name="Matsunawa H."/>
            <person name="Ichihara T."/>
            <person name="Shiohata N."/>
            <person name="Sano S."/>
            <person name="Moriya S."/>
            <person name="Momiyama H."/>
            <person name="Satoh N."/>
            <person name="Takami S."/>
            <person name="Terashima Y."/>
            <person name="Suzuki O."/>
            <person name="Nakagawa S."/>
            <person name="Senoh A."/>
            <person name="Mizoguchi H."/>
            <person name="Goto Y."/>
            <person name="Shimizu F."/>
            <person name="Wakebe H."/>
            <person name="Hishigaki H."/>
            <person name="Watanabe T."/>
            <person name="Sugiyama A."/>
            <person name="Takemoto M."/>
            <person name="Kawakami B."/>
            <person name="Yamazaki M."/>
            <person name="Watanabe K."/>
            <person name="Kumagai A."/>
            <person name="Itakura S."/>
            <person name="Fukuzumi Y."/>
            <person name="Fujimori Y."/>
            <person name="Komiyama M."/>
            <person name="Tashiro H."/>
            <person name="Tanigami A."/>
            <person name="Fujiwara T."/>
            <person name="Ono T."/>
            <person name="Yamada K."/>
            <person name="Fujii Y."/>
            <person name="Ozaki K."/>
            <person name="Hirao M."/>
            <person name="Ohmori Y."/>
            <person name="Kawabata A."/>
            <person name="Hikiji T."/>
            <person name="Kobatake N."/>
            <person name="Inagaki H."/>
            <person name="Ikema Y."/>
            <person name="Okamoto S."/>
            <person name="Okitani R."/>
            <person name="Kawakami T."/>
            <person name="Noguchi S."/>
            <person name="Itoh T."/>
            <person name="Shigeta K."/>
            <person name="Senba T."/>
            <person name="Matsumura K."/>
            <person name="Nakajima Y."/>
            <person name="Mizuno T."/>
            <person name="Morinaga M."/>
            <person name="Sasaki M."/>
            <person name="Togashi T."/>
            <person name="Oyama M."/>
            <person name="Hata H."/>
            <person name="Watanabe M."/>
            <person name="Komatsu T."/>
            <person name="Mizushima-Sugano J."/>
            <person name="Satoh T."/>
            <person name="Shirai Y."/>
            <person name="Takahashi Y."/>
            <person name="Nakagawa K."/>
            <person name="Okumura K."/>
            <person name="Nagase T."/>
            <person name="Nomura N."/>
            <person name="Kikuchi H."/>
            <person name="Masuho Y."/>
            <person name="Yamashita R."/>
            <person name="Nakai K."/>
            <person name="Yada T."/>
            <person name="Nakamura Y."/>
            <person name="Ohara O."/>
            <person name="Isogai T."/>
            <person name="Sugano S."/>
        </authorList>
    </citation>
    <scope>NUCLEOTIDE SEQUENCE [LARGE SCALE MRNA] (ISOFORM 1)</scope>
    <source>
        <tissue>Uterus</tissue>
    </source>
</reference>
<reference key="2">
    <citation type="journal article" date="2007" name="BMC Genomics">
        <title>The full-ORF clone resource of the German cDNA consortium.</title>
        <authorList>
            <person name="Bechtel S."/>
            <person name="Rosenfelder H."/>
            <person name="Duda A."/>
            <person name="Schmidt C.P."/>
            <person name="Ernst U."/>
            <person name="Wellenreuther R."/>
            <person name="Mehrle A."/>
            <person name="Schuster C."/>
            <person name="Bahr A."/>
            <person name="Bloecker H."/>
            <person name="Heubner D."/>
            <person name="Hoerlein A."/>
            <person name="Michel G."/>
            <person name="Wedler H."/>
            <person name="Koehrer K."/>
            <person name="Ottenwaelder B."/>
            <person name="Poustka A."/>
            <person name="Wiemann S."/>
            <person name="Schupp I."/>
        </authorList>
    </citation>
    <scope>NUCLEOTIDE SEQUENCE [LARGE SCALE MRNA] (ISOFORM 2)</scope>
    <source>
        <tissue>Adipose tissue</tissue>
    </source>
</reference>
<reference key="3">
    <citation type="journal article" date="2005" name="Nature">
        <title>Generation and annotation of the DNA sequences of human chromosomes 2 and 4.</title>
        <authorList>
            <person name="Hillier L.W."/>
            <person name="Graves T.A."/>
            <person name="Fulton R.S."/>
            <person name="Fulton L.A."/>
            <person name="Pepin K.H."/>
            <person name="Minx P."/>
            <person name="Wagner-McPherson C."/>
            <person name="Layman D."/>
            <person name="Wylie K."/>
            <person name="Sekhon M."/>
            <person name="Becker M.C."/>
            <person name="Fewell G.A."/>
            <person name="Delehaunty K.D."/>
            <person name="Miner T.L."/>
            <person name="Nash W.E."/>
            <person name="Kremitzki C."/>
            <person name="Oddy L."/>
            <person name="Du H."/>
            <person name="Sun H."/>
            <person name="Bradshaw-Cordum H."/>
            <person name="Ali J."/>
            <person name="Carter J."/>
            <person name="Cordes M."/>
            <person name="Harris A."/>
            <person name="Isak A."/>
            <person name="van Brunt A."/>
            <person name="Nguyen C."/>
            <person name="Du F."/>
            <person name="Courtney L."/>
            <person name="Kalicki J."/>
            <person name="Ozersky P."/>
            <person name="Abbott S."/>
            <person name="Armstrong J."/>
            <person name="Belter E.A."/>
            <person name="Caruso L."/>
            <person name="Cedroni M."/>
            <person name="Cotton M."/>
            <person name="Davidson T."/>
            <person name="Desai A."/>
            <person name="Elliott G."/>
            <person name="Erb T."/>
            <person name="Fronick C."/>
            <person name="Gaige T."/>
            <person name="Haakenson W."/>
            <person name="Haglund K."/>
            <person name="Holmes A."/>
            <person name="Harkins R."/>
            <person name="Kim K."/>
            <person name="Kruchowski S.S."/>
            <person name="Strong C.M."/>
            <person name="Grewal N."/>
            <person name="Goyea E."/>
            <person name="Hou S."/>
            <person name="Levy A."/>
            <person name="Martinka S."/>
            <person name="Mead K."/>
            <person name="McLellan M.D."/>
            <person name="Meyer R."/>
            <person name="Randall-Maher J."/>
            <person name="Tomlinson C."/>
            <person name="Dauphin-Kohlberg S."/>
            <person name="Kozlowicz-Reilly A."/>
            <person name="Shah N."/>
            <person name="Swearengen-Shahid S."/>
            <person name="Snider J."/>
            <person name="Strong J.T."/>
            <person name="Thompson J."/>
            <person name="Yoakum M."/>
            <person name="Leonard S."/>
            <person name="Pearman C."/>
            <person name="Trani L."/>
            <person name="Radionenko M."/>
            <person name="Waligorski J.E."/>
            <person name="Wang C."/>
            <person name="Rock S.M."/>
            <person name="Tin-Wollam A.-M."/>
            <person name="Maupin R."/>
            <person name="Latreille P."/>
            <person name="Wendl M.C."/>
            <person name="Yang S.-P."/>
            <person name="Pohl C."/>
            <person name="Wallis J.W."/>
            <person name="Spieth J."/>
            <person name="Bieri T.A."/>
            <person name="Berkowicz N."/>
            <person name="Nelson J.O."/>
            <person name="Osborne J."/>
            <person name="Ding L."/>
            <person name="Meyer R."/>
            <person name="Sabo A."/>
            <person name="Shotland Y."/>
            <person name="Sinha P."/>
            <person name="Wohldmann P.E."/>
            <person name="Cook L.L."/>
            <person name="Hickenbotham M.T."/>
            <person name="Eldred J."/>
            <person name="Williams D."/>
            <person name="Jones T.A."/>
            <person name="She X."/>
            <person name="Ciccarelli F.D."/>
            <person name="Izaurralde E."/>
            <person name="Taylor J."/>
            <person name="Schmutz J."/>
            <person name="Myers R.M."/>
            <person name="Cox D.R."/>
            <person name="Huang X."/>
            <person name="McPherson J.D."/>
            <person name="Mardis E.R."/>
            <person name="Clifton S.W."/>
            <person name="Warren W.C."/>
            <person name="Chinwalla A.T."/>
            <person name="Eddy S.R."/>
            <person name="Marra M.A."/>
            <person name="Ovcharenko I."/>
            <person name="Furey T.S."/>
            <person name="Miller W."/>
            <person name="Eichler E.E."/>
            <person name="Bork P."/>
            <person name="Suyama M."/>
            <person name="Torrents D."/>
            <person name="Waterston R.H."/>
            <person name="Wilson R.K."/>
        </authorList>
    </citation>
    <scope>NUCLEOTIDE SEQUENCE [LARGE SCALE GENOMIC DNA]</scope>
</reference>
<reference key="4">
    <citation type="submission" date="2005-09" db="EMBL/GenBank/DDBJ databases">
        <authorList>
            <person name="Mural R.J."/>
            <person name="Istrail S."/>
            <person name="Sutton G.G."/>
            <person name="Florea L."/>
            <person name="Halpern A.L."/>
            <person name="Mobarry C.M."/>
            <person name="Lippert R."/>
            <person name="Walenz B."/>
            <person name="Shatkay H."/>
            <person name="Dew I."/>
            <person name="Miller J.R."/>
            <person name="Flanigan M.J."/>
            <person name="Edwards N.J."/>
            <person name="Bolanos R."/>
            <person name="Fasulo D."/>
            <person name="Halldorsson B.V."/>
            <person name="Hannenhalli S."/>
            <person name="Turner R."/>
            <person name="Yooseph S."/>
            <person name="Lu F."/>
            <person name="Nusskern D.R."/>
            <person name="Shue B.C."/>
            <person name="Zheng X.H."/>
            <person name="Zhong F."/>
            <person name="Delcher A.L."/>
            <person name="Huson D.H."/>
            <person name="Kravitz S.A."/>
            <person name="Mouchard L."/>
            <person name="Reinert K."/>
            <person name="Remington K.A."/>
            <person name="Clark A.G."/>
            <person name="Waterman M.S."/>
            <person name="Eichler E.E."/>
            <person name="Adams M.D."/>
            <person name="Hunkapiller M.W."/>
            <person name="Myers E.W."/>
            <person name="Venter J.C."/>
        </authorList>
    </citation>
    <scope>NUCLEOTIDE SEQUENCE [LARGE SCALE GENOMIC DNA]</scope>
</reference>
<reference key="5">
    <citation type="journal article" date="2004" name="Genome Res.">
        <title>The status, quality, and expansion of the NIH full-length cDNA project: the Mammalian Gene Collection (MGC).</title>
        <authorList>
            <consortium name="The MGC Project Team"/>
        </authorList>
    </citation>
    <scope>NUCLEOTIDE SEQUENCE [LARGE SCALE MRNA] (ISOFORM 1)</scope>
    <source>
        <tissue>Uterus</tissue>
    </source>
</reference>
<reference key="6">
    <citation type="journal article" date="2009" name="Sci. Signal.">
        <title>Quantitative phosphoproteomic analysis of T cell receptor signaling reveals system-wide modulation of protein-protein interactions.</title>
        <authorList>
            <person name="Mayya V."/>
            <person name="Lundgren D.H."/>
            <person name="Hwang S.-I."/>
            <person name="Rezaul K."/>
            <person name="Wu L."/>
            <person name="Eng J.K."/>
            <person name="Rodionov V."/>
            <person name="Han D.K."/>
        </authorList>
    </citation>
    <scope>PHOSPHORYLATION [LARGE SCALE ANALYSIS] AT SER-255</scope>
    <scope>IDENTIFICATION BY MASS SPECTROMETRY [LARGE SCALE ANALYSIS]</scope>
    <source>
        <tissue>Leukemic T-cell</tissue>
    </source>
</reference>
<reference key="7">
    <citation type="journal article" date="2013" name="EMBO Rep.">
        <title>hPrimpol1/CCDC111 is a human DNA primase-polymerase required for the maintenance of genome integrity.</title>
        <authorList>
            <person name="Wan L."/>
            <person name="Lou J."/>
            <person name="Xia Y."/>
            <person name="Su B."/>
            <person name="Liu T."/>
            <person name="Cui J."/>
            <person name="Sun Y."/>
            <person name="Lou H."/>
            <person name="Huang J."/>
        </authorList>
    </citation>
    <scope>FUNCTION</scope>
    <scope>CATALYTIC ACTIVITY</scope>
    <scope>INTERACTION WITH RPA1</scope>
    <scope>MUTAGENESIS OF ASP-114; HIS-169 AND HIS-426</scope>
</reference>
<reference key="8">
    <citation type="journal article" date="2013" name="J. Proteome Res.">
        <title>Toward a comprehensive characterization of a human cancer cell phosphoproteome.</title>
        <authorList>
            <person name="Zhou H."/>
            <person name="Di Palma S."/>
            <person name="Preisinger C."/>
            <person name="Peng M."/>
            <person name="Polat A.N."/>
            <person name="Heck A.J."/>
            <person name="Mohammed S."/>
        </authorList>
    </citation>
    <scope>PHOSPHORYLATION [LARGE SCALE ANALYSIS] AT SER-255</scope>
    <scope>IDENTIFICATION BY MASS SPECTROMETRY [LARGE SCALE ANALYSIS]</scope>
    <source>
        <tissue>Cervix carcinoma</tissue>
        <tissue>Erythroleukemia</tissue>
    </source>
</reference>
<reference key="9">
    <citation type="journal article" date="2013" name="Mol. Cell">
        <title>PrimPol, an archaic primase/polymerase operating in human cells.</title>
        <authorList>
            <person name="Garcia-Gomez S."/>
            <person name="Reyes A."/>
            <person name="Martinez-Jimenez M.I."/>
            <person name="Chocron E.S."/>
            <person name="Mouron S."/>
            <person name="Terrados G."/>
            <person name="Powell C."/>
            <person name="Salido E."/>
            <person name="Mendez J."/>
            <person name="Holt I.J."/>
            <person name="Blanco L."/>
        </authorList>
    </citation>
    <scope>FUNCTION</scope>
    <scope>CATALYTIC ACTIVITY</scope>
    <scope>SUBCELLULAR LOCATION</scope>
    <scope>COFACTOR</scope>
    <scope>MUTAGENESIS OF 114-ASP--GLU-116</scope>
</reference>
<reference key="10">
    <citation type="journal article" date="2013" name="Mol. Cell">
        <title>PrimPol bypasses UV photoproducts during eukaryotic chromosomal DNA replication.</title>
        <authorList>
            <person name="Bianchi J."/>
            <person name="Rudd S.G."/>
            <person name="Jozwiakowski S.K."/>
            <person name="Bailey L.J."/>
            <person name="Soura V."/>
            <person name="Taylor E."/>
            <person name="Stevanovic I."/>
            <person name="Green A.J."/>
            <person name="Stracker T.H."/>
            <person name="Lindsay H.D."/>
            <person name="Doherty A.J."/>
        </authorList>
    </citation>
    <scope>FUNCTION</scope>
    <scope>CATALYTIC ACTIVITY</scope>
    <scope>MUTAGENESIS OF 114-ASP--GLU-116</scope>
</reference>
<reference key="11">
    <citation type="journal article" date="2013" name="Nat. Struct. Mol. Biol.">
        <title>Repriming of DNA synthesis at stalled replication forks by human PrimPol.</title>
        <authorList>
            <person name="Mouron S."/>
            <person name="Rodriguez-Acebes S."/>
            <person name="Martinez-Jimenez M.I."/>
            <person name="Garcia-Gomez S."/>
            <person name="Chocron S."/>
            <person name="Blanco L."/>
            <person name="Mendez J."/>
        </authorList>
    </citation>
    <scope>FUNCTION</scope>
    <scope>CATALYTIC ACTIVITY</scope>
    <scope>SUBCELLULAR LOCATION</scope>
    <scope>MUTAGENESIS OF CYS-419 AND HIS-426</scope>
</reference>
<reference key="12">
    <citation type="journal article" date="2014" name="Biochemistry">
        <title>Kinetic analysis of human PrimPol DNA polymerase activity reveals a generally error-prone enzyme capable of accurately bypassing 7,8-dihydro-8-oxo-2'-deoxyguanosine.</title>
        <authorList>
            <person name="Zafar M.K."/>
            <person name="Ketkar A."/>
            <person name="Lodeiro M.F."/>
            <person name="Cameron C.E."/>
            <person name="Eoff R.L."/>
        </authorList>
    </citation>
    <scope>FUNCTION</scope>
    <scope>CATALYTIC ACTIVITY</scope>
    <scope>COFACTOR</scope>
</reference>
<reference key="13">
    <citation type="journal article" date="2014" name="Nucleic Acids Res.">
        <title>Molecular dissection of the domain architecture and catalytic activities of human PrimPol.</title>
        <authorList>
            <person name="Keen B.A."/>
            <person name="Jozwiakowski S.K."/>
            <person name="Bailey L.J."/>
            <person name="Bianchi J."/>
            <person name="Doherty A.J."/>
        </authorList>
    </citation>
    <scope>DOMAIN</scope>
    <scope>FUNCTION</scope>
    <scope>CATALYTIC ACTIVITY</scope>
    <scope>MUTAGENESIS OF 114-ASP--GLU-116; CYS-419 AND HIS-426</scope>
</reference>
<reference key="14">
    <citation type="journal article" date="2014" name="Nucleic Acids Res.">
        <title>Human PrimPol mutation associated with high myopia has a DNA replication defect.</title>
        <authorList>
            <person name="Keen B.A."/>
            <person name="Bailey L.J."/>
            <person name="Jozwiakowski S.K."/>
            <person name="Doherty A.J."/>
        </authorList>
    </citation>
    <scope>FUNCTION</scope>
    <scope>CATALYTIC ACTIVITY</scope>
    <scope>CHARACTERIZATION OF VARIANT MYP22 ASP-89</scope>
    <scope>MUTAGENESIS OF TYR-89</scope>
</reference>
<reference key="15">
    <citation type="journal article" date="2015" name="DNA Repair">
        <title>Alternative solutions and new scenarios for translesion DNA synthesis by human PrimPol.</title>
        <authorList>
            <person name="Martinez-Jimenez M.I."/>
            <person name="Garcia-Gomez S."/>
            <person name="Bebenek K."/>
            <person name="Sastre-Moreno G."/>
            <person name="Calvo P.A."/>
            <person name="Diaz-Talavera A."/>
            <person name="Kunkel T.A."/>
            <person name="Blanco L."/>
        </authorList>
    </citation>
    <scope>FUNCTION</scope>
    <scope>CATALYTIC ACTIVITY</scope>
    <scope>COFACTOR</scope>
</reference>
<reference key="16">
    <citation type="journal article" date="2015" name="Invest. Ophthalmol. Vis. Sci.">
        <title>PRIMPOL mutation: functional study does not always reveal the truth.</title>
        <authorList>
            <person name="Li J."/>
            <person name="Zhang Q."/>
        </authorList>
    </citation>
    <scope>COMMENT ON PUBMED:25262353 RESULTS</scope>
</reference>
<reference key="17">
    <citation type="journal article" date="2015" name="Invest. Ophthalmol. Vis. Sci.">
        <title>Author response: PRIMPOL mutation: functional study does not always reveal the truth.</title>
        <authorList>
            <person name="Keen B.A."/>
            <person name="Bailey L.J."/>
            <person name="Jozwiakowski S.K."/>
            <person name="Doherty A.J."/>
        </authorList>
    </citation>
    <scope>COMMENT ON PUBMED:25680975</scope>
</reference>
<reference key="18">
    <citation type="journal article" date="2015" name="Nucleic Acids Res.">
        <title>Human PrimPol is a highly error-prone polymerase regulated by single-stranded DNA binding proteins.</title>
        <authorList>
            <person name="Guilliam T.A."/>
            <person name="Jozwiakowski S.K."/>
            <person name="Ehlinger A."/>
            <person name="Barnes R.P."/>
            <person name="Rudd S.G."/>
            <person name="Bailey L.J."/>
            <person name="Skehel J.M."/>
            <person name="Eckert K.A."/>
            <person name="Chazin W.J."/>
            <person name="Doherty A.J."/>
        </authorList>
    </citation>
    <scope>FUNCTION</scope>
    <scope>INTERACTION WITH RPA1 AND SSBP1</scope>
</reference>
<reference key="19">
    <citation type="journal article" date="2016" name="Mol. Cell">
        <title>PrimPol is required for replicative tolerance of G quadruplexes in vertebrate cells.</title>
        <authorList>
            <person name="Schiavone D."/>
            <person name="Jozwiakowski S.K."/>
            <person name="Romanello M."/>
            <person name="Guilbaud G."/>
            <person name="Guilliam T.A."/>
            <person name="Bailey L.J."/>
            <person name="Sale J.E."/>
            <person name="Doherty A.J."/>
        </authorList>
    </citation>
    <scope>FUNCTION</scope>
    <scope>MUTAGENESIS OF 114-ASP--GLU-116; CYS-419 AND HIS-426</scope>
</reference>
<reference key="20">
    <citation type="journal article" date="2016" name="Nucleic Acids Res.">
        <title>PolDIP2 interacts with human PrimPol and enhances its DNA polymerase activities.</title>
        <authorList>
            <person name="Guilliam T.A."/>
            <person name="Bailey L.J."/>
            <person name="Brissett N.C."/>
            <person name="Doherty A.J."/>
        </authorList>
    </citation>
    <scope>INTERACTION WITH POLDIP2</scope>
</reference>
<reference key="21">
    <citation type="journal article" date="2017" name="DNA Repair">
        <title>Significant impact of divalent metal ions on the fidelity, sugar selectivity, and drug incorporation efficiency of human PrimPol.</title>
        <authorList>
            <person name="Tokarsky E.J."/>
            <person name="Wallenmeyer P.C."/>
            <person name="Phi K.K."/>
            <person name="Suo Z."/>
        </authorList>
    </citation>
    <scope>FUNCTION</scope>
    <scope>CATALYTIC ACTIVITY</scope>
    <scope>COFACTOR</scope>
</reference>
<reference key="22">
    <citation type="journal article" date="2017" name="Sci. Rep.">
        <title>Human PrimPol activity is enhanced by RPA.</title>
        <authorList>
            <person name="Martinez-Jimenez M.I."/>
            <person name="Lahera A."/>
            <person name="Blanco L."/>
        </authorList>
    </citation>
    <scope>INTERACTION WITH RPA1</scope>
</reference>
<reference key="23">
    <citation type="journal article" date="2019" name="EMBO J.">
        <title>R-loop formation during S phase is restricted by PrimPol-mediated repriming.</title>
        <authorList>
            <person name="Svikovic S."/>
            <person name="Crisp A."/>
            <person name="Tan-Wong S.M."/>
            <person name="Guilliam T.A."/>
            <person name="Doherty A.J."/>
            <person name="Proudfoot N.J."/>
            <person name="Guilbaud G."/>
            <person name="Sale J.E."/>
        </authorList>
    </citation>
    <scope>FUNCTION</scope>
    <scope>CATALYTIC ACTIVITY</scope>
    <scope>MUTAGENESIS OF 114-ASP--GLU-116; CYS-419 AND HIS-426</scope>
</reference>
<reference key="24">
    <citation type="journal article" date="2018" name="Nucleic Acids Res.">
        <title>The Zn-finger domain of human PrimPol is required to stabilize the initiating nucleotide during DNA priming.</title>
        <authorList>
            <person name="Martinez-Jimenez M.I."/>
            <person name="Calvo P.A."/>
            <person name="Garcia-Gomez S."/>
            <person name="Guerra-Gonzalez S."/>
            <person name="Blanco L."/>
        </authorList>
    </citation>
    <scope>DOMAIN</scope>
    <scope>FUNCTION</scope>
    <scope>CATALYTIC ACTIVITY</scope>
    <scope>MUTAGENESIS OF 114-ASP--GLU-116</scope>
</reference>
<reference key="25">
    <citation type="journal article" date="2019" name="DNA Repair">
        <title>The invariant glutamate of human PrimPol DxE motif is critical for its Mn2+-dependent distinctive activities.</title>
        <authorList>
            <person name="Calvo P.A."/>
            <person name="Sastre-Moreno G."/>
            <person name="Perpina C."/>
            <person name="Guerra S."/>
            <person name="Martinez-Jimenez M.I."/>
            <person name="Blanco L."/>
        </authorList>
    </citation>
    <scope>FUNCTION</scope>
    <scope>CATALYTIC ACTIVITY</scope>
    <scope>COFACTOR</scope>
    <scope>DOMAIN</scope>
    <scope>MUTAGENESIS OF 114-ASP--GLU-116 AND ASP-280</scope>
</reference>
<reference key="26">
    <citation type="journal article" date="2019" name="J. Mol. Biol.">
        <title>Divalent cations alter the rate-limiting step of PrimPol-catalyzed DNA elongation.</title>
        <authorList>
            <person name="Xu W."/>
            <person name="Zhao W."/>
            <person name="Morehouse N."/>
            <person name="Tree M.O."/>
            <person name="Zhao L."/>
        </authorList>
    </citation>
    <scope>FUNCTION</scope>
    <scope>CATALYTIC ACTIVITY</scope>
    <scope>COFACTOR</scope>
    <scope>BIOPHYSICOCHEMICAL PROPERTIES</scope>
</reference>
<reference key="27">
    <citation type="journal article" date="2019" name="Mol. Cell">
        <title>PRIMPOL-mediated adaptive response suppresses replication fork reversal in BRCA-deficient cells.</title>
        <authorList>
            <person name="Quinet A."/>
            <person name="Tirman S."/>
            <person name="Jackson J."/>
            <person name="Svikovic S."/>
            <person name="Lemacon D."/>
            <person name="Carvajal-Maldonado D."/>
            <person name="Gonzalez-Acosta D."/>
            <person name="Vessoni A.T."/>
            <person name="Cybulla E."/>
            <person name="Wood M."/>
            <person name="Tavis S."/>
            <person name="Batista L.F.Z."/>
            <person name="Mendez J."/>
            <person name="Sale J.E."/>
            <person name="Vindigni A."/>
        </authorList>
    </citation>
    <scope>FUNCTION</scope>
</reference>
<reference key="28">
    <citation type="journal article" date="2019" name="Nucleic Acids Res.">
        <title>PrimPol is required for the maintenance of efficient nuclear and mitochondrial DNA replication in human cells.</title>
        <authorList>
            <person name="Bailey L.J."/>
            <person name="Bianchi J."/>
            <person name="Doherty A.J."/>
        </authorList>
    </citation>
    <scope>FUNCTION</scope>
</reference>
<reference evidence="36" key="29">
    <citation type="journal article" date="2016" name="Sci. Adv.">
        <title>Structure and mechanism of human PrimPol, a DNA polymerase with primase activity.</title>
        <authorList>
            <person name="Rechkoblit O."/>
            <person name="Gupta Y.K."/>
            <person name="Malik R."/>
            <person name="Rajashankar K.R."/>
            <person name="Johnson R.E."/>
            <person name="Prakash L."/>
            <person name="Prakash S."/>
            <person name="Aggarwal A.K."/>
        </authorList>
    </citation>
    <scope>X-RAY CRYSTALLOGRAPHY (2.20 ANGSTROMS) OF 1-353 IN COMPLEX WITH 2'-DEOXYADENOSINE 5'-TRIPHOSPHATE AND CALCIUM</scope>
</reference>
<reference evidence="37 38" key="30">
    <citation type="journal article" date="2017" name="Nat. Commun.">
        <title>Molecular basis for PrimPol recruitment to replication forks by RPA.</title>
        <authorList>
            <person name="Guilliam T.A."/>
            <person name="Brissett N.C."/>
            <person name="Ehlinger A."/>
            <person name="Keen B.A."/>
            <person name="Kolesar P."/>
            <person name="Taylor E.M."/>
            <person name="Bailey L.J."/>
            <person name="Lindsay H.D."/>
            <person name="Chazin W.J."/>
            <person name="Doherty A.J."/>
        </authorList>
    </citation>
    <scope>X-RAY CRYSTALLOGRAPHY (1.28 ANGSTROMS) OF 480-560 IN COMPLEX WITH RPA1</scope>
    <scope>FUNCTION</scope>
    <scope>CATALYTIC ACTIVITY</scope>
    <scope>SUBCELLULAR LOCATION</scope>
    <scope>RPA1-BINDING MOTIF</scope>
    <scope>MUTAGENESIS OF 519-ASP--PHE-522 AND 551-ASP--ILE-554</scope>
</reference>
<reference key="31">
    <citation type="journal article" date="2013" name="Hum. Genet.">
        <title>Exome sequencing reveals CCDC111 mutation associated with high myopia.</title>
        <authorList>
            <person name="Zhao F."/>
            <person name="Wu J."/>
            <person name="Xue A."/>
            <person name="Su Y."/>
            <person name="Wang X."/>
            <person name="Lu X."/>
            <person name="Zhou Z."/>
            <person name="Qu J."/>
            <person name="Zhou X."/>
        </authorList>
    </citation>
    <scope>VARIANT MYP22 ASP-89</scope>
</reference>
<evidence type="ECO:0000250" key="1">
    <source>
        <dbReference type="UniProtKB" id="Q6P1E7"/>
    </source>
</evidence>
<evidence type="ECO:0000255" key="2"/>
<evidence type="ECO:0000256" key="3">
    <source>
        <dbReference type="SAM" id="MobiDB-lite"/>
    </source>
</evidence>
<evidence type="ECO:0000269" key="4">
    <source>
    </source>
</evidence>
<evidence type="ECO:0000269" key="5">
    <source>
    </source>
</evidence>
<evidence type="ECO:0000269" key="6">
    <source>
    </source>
</evidence>
<evidence type="ECO:0000269" key="7">
    <source>
    </source>
</evidence>
<evidence type="ECO:0000269" key="8">
    <source>
    </source>
</evidence>
<evidence type="ECO:0000269" key="9">
    <source>
    </source>
</evidence>
<evidence type="ECO:0000269" key="10">
    <source>
    </source>
</evidence>
<evidence type="ECO:0000269" key="11">
    <source>
    </source>
</evidence>
<evidence type="ECO:0000269" key="12">
    <source>
    </source>
</evidence>
<evidence type="ECO:0000269" key="13">
    <source>
    </source>
</evidence>
<evidence type="ECO:0000269" key="14">
    <source>
    </source>
</evidence>
<evidence type="ECO:0000269" key="15">
    <source>
    </source>
</evidence>
<evidence type="ECO:0000269" key="16">
    <source>
    </source>
</evidence>
<evidence type="ECO:0000269" key="17">
    <source>
    </source>
</evidence>
<evidence type="ECO:0000269" key="18">
    <source>
    </source>
</evidence>
<evidence type="ECO:0000269" key="19">
    <source>
    </source>
</evidence>
<evidence type="ECO:0000269" key="20">
    <source>
    </source>
</evidence>
<evidence type="ECO:0000269" key="21">
    <source>
    </source>
</evidence>
<evidence type="ECO:0000269" key="22">
    <source>
    </source>
</evidence>
<evidence type="ECO:0000269" key="23">
    <source>
    </source>
</evidence>
<evidence type="ECO:0000269" key="24">
    <source>
    </source>
</evidence>
<evidence type="ECO:0000269" key="25">
    <source>
    </source>
</evidence>
<evidence type="ECO:0000303" key="26">
    <source>
    </source>
</evidence>
<evidence type="ECO:0000303" key="27">
    <source>
    </source>
</evidence>
<evidence type="ECO:0000303" key="28">
    <source>
    </source>
</evidence>
<evidence type="ECO:0000305" key="29"/>
<evidence type="ECO:0000305" key="30">
    <source>
    </source>
</evidence>
<evidence type="ECO:0000305" key="31">
    <source>
    </source>
</evidence>
<evidence type="ECO:0000305" key="32">
    <source>
    </source>
</evidence>
<evidence type="ECO:0000305" key="33">
    <source>
    </source>
</evidence>
<evidence type="ECO:0000305" key="34">
    <source>
    </source>
</evidence>
<evidence type="ECO:0000312" key="35">
    <source>
        <dbReference type="HGNC" id="HGNC:26575"/>
    </source>
</evidence>
<evidence type="ECO:0007744" key="36">
    <source>
        <dbReference type="PDB" id="5L2X"/>
    </source>
</evidence>
<evidence type="ECO:0007744" key="37">
    <source>
        <dbReference type="PDB" id="5N85"/>
    </source>
</evidence>
<evidence type="ECO:0007744" key="38">
    <source>
        <dbReference type="PDB" id="5N8A"/>
    </source>
</evidence>
<evidence type="ECO:0007744" key="39">
    <source>
    </source>
</evidence>
<evidence type="ECO:0007744" key="40">
    <source>
    </source>
</evidence>
<evidence type="ECO:0007829" key="41">
    <source>
        <dbReference type="PDB" id="5N85"/>
    </source>
</evidence>
<evidence type="ECO:0007829" key="42">
    <source>
        <dbReference type="PDB" id="5N8A"/>
    </source>
</evidence>
<evidence type="ECO:0007829" key="43">
    <source>
        <dbReference type="PDB" id="7JKL"/>
    </source>
</evidence>
<evidence type="ECO:0007829" key="44">
    <source>
        <dbReference type="PDB" id="7JL8"/>
    </source>
</evidence>
<evidence type="ECO:0007829" key="45">
    <source>
        <dbReference type="PDB" id="7JLG"/>
    </source>
</evidence>
<accession>Q96LW4</accession>
<accession>A0A0A0MTC0</accession>
<accession>D3DP55</accession>
<accession>D6RDM1</accession>
<accession>Q5HYJ9</accession>
<protein>
    <recommendedName>
        <fullName evidence="28">DNA-directed primase/polymerase protein</fullName>
        <shortName evidence="28">hPrimpol1</shortName>
        <ecNumber evidence="5 6 8 9 19 20 21">2.7.7.102</ecNumber>
        <ecNumber evidence="5 6 13">2.7.7.7</ecNumber>
    </recommendedName>
    <alternativeName>
        <fullName evidence="27">Coiled-coil domain-containing protein 111</fullName>
    </alternativeName>
</protein>
<gene>
    <name evidence="28 35" type="primary">PRIMPOL</name>
    <name evidence="27" type="synonym">CCDC111</name>
</gene>
<comment type="function">
    <text evidence="1 5 6 7 8 9 10 11 12 13 14 17 19 20 21 22 23 24 25">DNA primase and DNA polymerase required to tolerate replication-stalling lesions by bypassing them (PubMed:24126761, PubMed:24207056, PubMed:24240614, PubMed:24267451, PubMed:24682820, PubMed:25255211, PubMed:25262353, PubMed:25550423, PubMed:25746449, PubMed:27989484, PubMed:28534480, PubMed:29608762, PubMed:30889508, PubMed:31676232). Required to facilitate mitochondrial and nuclear replication fork progression by initiating de novo DNA synthesis using dNTPs and acting as an error-prone DNA polymerase able to bypass certain DNA lesions (PubMed:24126761, PubMed:24207056, PubMed:24240614, PubMed:24267451, PubMed:24682820, PubMed:25255211, PubMed:25262353, PubMed:25550423, PubMed:25746449, PubMed:27989484, PubMed:28534480, PubMed:29608762, PubMed:30633872, PubMed:30889508). Shows a high capacity to tolerate DNA damage lesions such as 8oxoG and abasic sites in DNA (PubMed:24126761, PubMed:24207056, PubMed:24240614, PubMed:24267451, PubMed:25746449). Provides different translesion synthesis alternatives when DNA replication is stalled: able to synthesize DNA primers downstream of lesions, such as ultraviolet (UV) lesions, R-loops and G-quadruplexes, to allow DNA replication to continue (PubMed:24240614, PubMed:26626482, PubMed:28534480, PubMed:30478192). Can also realign primers ahead of 'unreadable lesions' such as abasic sites and 6-4 photoproduct (6-4 pyrimidine-pyrimidinone), thereby skipping the lesion. Repriming avoids fork degradation while leading to accumulation of internal ssDNA gaps behind the forks (PubMed:24240614, PubMed:25746449, PubMed:31676232). Also able to incorporate nucleotides opposite DNA lesions such as 8oxoG, like a regular translesion synthesis DNA polymerase (PubMed:24207056, PubMed:25255211, PubMed:25746449). Also required for reinitiating stalled forks after UV damage during nuclear DNA replication (PubMed:24240614). Required for mitochondrial DNA (mtDNA) synthesis and replication, by reinitiating synthesis after UV damage or in the presence of chain-terminating nucleotides (PubMed:24207056). Prevents APOBEC family-mediated DNA mutagenesis by repriming downstream of abasic site to prohibit error-prone translesion synthesis (By similarity). Has non-overlapping function with POLH (PubMed:24240614). In addition to its role in DNA damage response, also required to maintain efficient nuclear and mitochondrial DNA replication in unperturbed cells (PubMed:30715459).</text>
</comment>
<comment type="catalytic activity">
    <reaction evidence="5 6 7 8 9 19 20 21">
        <text>ssDNA + n NTP = ssDNA/pppN(pN)n-1 hybrid + (n-1) diphosphate.</text>
        <dbReference type="EC" id="2.7.7.102"/>
    </reaction>
</comment>
<comment type="catalytic activity">
    <reaction evidence="5 6 13">
        <text>DNA(n) + a 2'-deoxyribonucleoside 5'-triphosphate = DNA(n+1) + diphosphate</text>
        <dbReference type="Rhea" id="RHEA:22508"/>
        <dbReference type="Rhea" id="RHEA-COMP:17339"/>
        <dbReference type="Rhea" id="RHEA-COMP:17340"/>
        <dbReference type="ChEBI" id="CHEBI:33019"/>
        <dbReference type="ChEBI" id="CHEBI:61560"/>
        <dbReference type="ChEBI" id="CHEBI:173112"/>
        <dbReference type="EC" id="2.7.7.7"/>
    </reaction>
    <physiologicalReaction direction="left-to-right" evidence="31 33">
        <dbReference type="Rhea" id="RHEA:22509"/>
    </physiologicalReaction>
</comment>
<comment type="cofactor">
    <cofactor evidence="10 13 17 22 24 31">
        <name>Mn(2+)</name>
        <dbReference type="ChEBI" id="CHEBI:29035"/>
    </cofactor>
    <text evidence="10 13 17 22 24">Can act both with Mn(2+) and Mg(2+) as cofactor in vitro, but Mn(2+) is the preferred cofactor in vivo (PubMed:25255211, PubMed:25746449, PubMed:27989484, PubMed:30633872, PubMed:30889508). The polymerase activity incorporates correct dNTPs with much higher efficiency with Mn(2+) than with Mg(2+) (PubMed:25255211, PubMed:30889508). The fidelity is slightly more accurate when Mg(2+) is the cofactor compared to Mn(2+) (PubMed:25255211, PubMed:30889508). In the presence of Mn(2+), a conformational transition step from non-productive to productive PRIMPOL:DNA complexes limits the enzymatic turnover, whereas in the presence of Mg(2+), the chemical step becomes rate limiting (PubMed:30633872).</text>
</comment>
<comment type="biophysicochemical properties">
    <kinetics>
        <KM evidence="22">14 uM for dTTP (in presence of 2 mM of Mn(2+))</KM>
        <KM evidence="22">24 uM for dTTP (in presence of 50 uM of Mn(2+))</KM>
        <KM evidence="22">430 uM for dTTP (in presence of 2 mM of Mg(2+))</KM>
        <text>kcat is 0.05 sec(-1) for dTTP (in presence of 2 mM of Mn(2+)). kcat is 0.02 sec(-1) for dTTP (in presence of 50 uM of Mn(2+)). kcat is 0.01 sec(-1) for dTTP (in presence of 2 mM of Mg(2+)).</text>
    </kinetics>
</comment>
<comment type="subunit">
    <text evidence="5 12 15 18 19">Interacts with RPA1; leading to recruitment to chromatin and stimulate DNA primase activity (PubMed:24126761, PubMed:25550423, PubMed:28396594, PubMed:28534480). Interacts with SSBP1 (PubMed:25550423). Interacts with POLDIP2; leading to enhance DNA polymerase activity (PubMed:26984527).</text>
</comment>
<comment type="interaction">
    <interactant intactId="EBI-10044038">
        <id>Q96LW4</id>
    </interactant>
    <interactant intactId="EBI-745859">
        <id>P55273</id>
        <label>CDKN2D</label>
    </interactant>
    <organismsDiffer>false</organismsDiffer>
    <experiments>3</experiments>
</comment>
<comment type="interaction">
    <interactant intactId="EBI-10044038">
        <id>Q96LW4</id>
    </interactant>
    <interactant intactId="EBI-711788">
        <id>Q00013</id>
        <label>MPP1</label>
    </interactant>
    <organismsDiffer>false</organismsDiffer>
    <experiments>3</experiments>
</comment>
<comment type="interaction">
    <interactant intactId="EBI-10044038">
        <id>Q96LW4</id>
    </interactant>
    <interactant intactId="EBI-11953718">
        <id>Q8NEY1-3</id>
        <label>NAV1</label>
    </interactant>
    <organismsDiffer>false</organismsDiffer>
    <experiments>5</experiments>
</comment>
<comment type="interaction">
    <interactant intactId="EBI-10044038">
        <id>Q96LW4</id>
    </interactant>
    <interactant intactId="EBI-359352">
        <id>P25786</id>
        <label>PSMA1</label>
    </interactant>
    <organismsDiffer>false</organismsDiffer>
    <experiments>3</experiments>
</comment>
<comment type="interaction">
    <interactant intactId="EBI-10044038">
        <id>Q96LW4</id>
    </interactant>
    <interactant intactId="EBI-621389">
        <id>P27694</id>
        <label>RPA1</label>
    </interactant>
    <organismsDiffer>false</organismsDiffer>
    <experiments>7</experiments>
</comment>
<comment type="subcellular location">
    <subcellularLocation>
        <location evidence="6 7">Nucleus</location>
    </subcellularLocation>
    <subcellularLocation>
        <location evidence="6">Mitochondrion matrix</location>
    </subcellularLocation>
    <subcellularLocation>
        <location evidence="19">Chromosome</location>
    </subcellularLocation>
    <text evidence="6 19">Present in the nucleus, but a larger fraction is localized inside mitochondria (PubMed:24207056). Associates with nuclear chromatin during the G1 and S phases of unperturbed cell cycles (PubMed:24207056). Recruited to stalled replication forks following interaction with RPA1 (PubMed:28534480).</text>
</comment>
<comment type="alternative products">
    <event type="alternative splicing"/>
    <isoform>
        <id>Q96LW4-1</id>
        <name>1</name>
        <sequence type="displayed"/>
    </isoform>
    <isoform>
        <id>Q96LW4-2</id>
        <name>2</name>
        <sequence type="described" ref="VSP_053600"/>
    </isoform>
</comment>
<comment type="domain">
    <text evidence="9 20">The zinc knuckle motif binds zinc and is required for the DNA primase activity (PubMed:24682820, PubMed:29608762). It facilitates the binding and selection of the 5'-nucleotide of the newly synthesized primer and the recognition of preferred initiation sites (PubMed:29608762).</text>
</comment>
<comment type="domain">
    <text evidence="19">The RPA1-binding motifs (RBM) mediate interaction with RPA1 and are essential for recruitment to chromatin (PubMed:28534480). The interaction is primarily mediated by RPA1-binding motif 1, which binds to the basic cleft of RPA1, with motif 2 plays a supporting role in RPA1-binding (PubMed:28534480).</text>
</comment>
<comment type="domain">
    <text evidence="24">The presence of an Asp-Aaa-Glu (DxE) motif in the metal-binding active site favors the use of Mn(2+) ions to achieve optimal incoming nucleotide stabilization, especially required during primer synthesis (PubMed:30889508). Glu-116 is required to stabilize the incoming nucleotide at the 3'-site (PubMed:30889508).</text>
</comment>
<comment type="disease" evidence="4 11">
    <disease id="DI-03878">
        <name>Myopia 22, autosomal dominant</name>
        <acronym>MYP22</acronym>
        <description>A refractive error of the eye, in which parallel rays from a distant object come to focus in front of the retina, vision being better for near objects than for far.</description>
        <dbReference type="MIM" id="615420"/>
    </disease>
    <text>The disease is caused by variants affecting the gene represented in this entry.</text>
</comment>
<comment type="similarity">
    <text evidence="29">Belongs to the eukaryotic-type primase small subunit family.</text>
</comment>
<proteinExistence type="evidence at protein level"/>
<name>PRIPO_HUMAN</name>
<organism>
    <name type="scientific">Homo sapiens</name>
    <name type="common">Human</name>
    <dbReference type="NCBI Taxonomy" id="9606"/>
    <lineage>
        <taxon>Eukaryota</taxon>
        <taxon>Metazoa</taxon>
        <taxon>Chordata</taxon>
        <taxon>Craniata</taxon>
        <taxon>Vertebrata</taxon>
        <taxon>Euteleostomi</taxon>
        <taxon>Mammalia</taxon>
        <taxon>Eutheria</taxon>
        <taxon>Euarchontoglires</taxon>
        <taxon>Primates</taxon>
        <taxon>Haplorrhini</taxon>
        <taxon>Catarrhini</taxon>
        <taxon>Hominidae</taxon>
        <taxon>Homo</taxon>
    </lineage>
</organism>
<dbReference type="EC" id="2.7.7.102" evidence="5 6 8 9 19 20 21"/>
<dbReference type="EC" id="2.7.7.7" evidence="5 6 13"/>
<dbReference type="EMBL" id="AK057729">
    <property type="protein sequence ID" value="BAB71553.1"/>
    <property type="molecule type" value="mRNA"/>
</dbReference>
<dbReference type="EMBL" id="BX647575">
    <property type="protein sequence ID" value="CAI46079.1"/>
    <property type="molecule type" value="mRNA"/>
</dbReference>
<dbReference type="EMBL" id="AC079257">
    <property type="status" value="NOT_ANNOTATED_CDS"/>
    <property type="molecule type" value="Genomic_DNA"/>
</dbReference>
<dbReference type="EMBL" id="KF459591">
    <property type="status" value="NOT_ANNOTATED_CDS"/>
    <property type="molecule type" value="Genomic_DNA"/>
</dbReference>
<dbReference type="EMBL" id="CH471056">
    <property type="protein sequence ID" value="EAX04667.1"/>
    <property type="molecule type" value="Genomic_DNA"/>
</dbReference>
<dbReference type="EMBL" id="CH471056">
    <property type="protein sequence ID" value="EAX04669.1"/>
    <property type="molecule type" value="Genomic_DNA"/>
</dbReference>
<dbReference type="EMBL" id="CH471056">
    <property type="protein sequence ID" value="EAX04670.1"/>
    <property type="molecule type" value="Genomic_DNA"/>
</dbReference>
<dbReference type="EMBL" id="BC064600">
    <property type="protein sequence ID" value="AAH64600.1"/>
    <property type="molecule type" value="mRNA"/>
</dbReference>
<dbReference type="CCDS" id="CCDS3837.1">
    <molecule id="Q96LW4-1"/>
</dbReference>
<dbReference type="CCDS" id="CCDS75211.1">
    <molecule id="Q96LW4-2"/>
</dbReference>
<dbReference type="RefSeq" id="NP_001287696.1">
    <property type="nucleotide sequence ID" value="NM_001300767.1"/>
</dbReference>
<dbReference type="RefSeq" id="NP_001287697.1">
    <molecule id="Q96LW4-2"/>
    <property type="nucleotide sequence ID" value="NM_001300768.2"/>
</dbReference>
<dbReference type="RefSeq" id="NP_001332824.1">
    <molecule id="Q96LW4-1"/>
    <property type="nucleotide sequence ID" value="NM_001345895.2"/>
</dbReference>
<dbReference type="RefSeq" id="NP_001332825.1">
    <molecule id="Q96LW4-2"/>
    <property type="nucleotide sequence ID" value="NM_001345896.2"/>
</dbReference>
<dbReference type="RefSeq" id="NP_689896.1">
    <molecule id="Q96LW4-1"/>
    <property type="nucleotide sequence ID" value="NM_152683.4"/>
</dbReference>
<dbReference type="PDB" id="5L2X">
    <property type="method" value="X-ray"/>
    <property type="resolution" value="2.20 A"/>
    <property type="chains" value="A/B=1-353"/>
</dbReference>
<dbReference type="PDB" id="5N85">
    <property type="method" value="X-ray"/>
    <property type="resolution" value="2.00 A"/>
    <property type="chains" value="B=514-528"/>
</dbReference>
<dbReference type="PDB" id="5N8A">
    <property type="method" value="X-ray"/>
    <property type="resolution" value="1.28 A"/>
    <property type="chains" value="X=480-560"/>
</dbReference>
<dbReference type="PDB" id="7JK1">
    <property type="method" value="X-ray"/>
    <property type="resolution" value="2.62 A"/>
    <property type="chains" value="A/B=1-354"/>
</dbReference>
<dbReference type="PDB" id="7JKL">
    <property type="method" value="X-ray"/>
    <property type="resolution" value="2.38 A"/>
    <property type="chains" value="A/B=1-354"/>
</dbReference>
<dbReference type="PDB" id="7JKP">
    <property type="method" value="X-ray"/>
    <property type="resolution" value="2.59 A"/>
    <property type="chains" value="A/B=1-354"/>
</dbReference>
<dbReference type="PDB" id="7JL8">
    <property type="method" value="X-ray"/>
    <property type="resolution" value="2.10 A"/>
    <property type="chains" value="A/B=1-354"/>
</dbReference>
<dbReference type="PDB" id="7JLG">
    <property type="method" value="X-ray"/>
    <property type="resolution" value="2.07 A"/>
    <property type="chains" value="A/B=1-354"/>
</dbReference>
<dbReference type="PDBsum" id="5L2X"/>
<dbReference type="PDBsum" id="5N85"/>
<dbReference type="PDBsum" id="5N8A"/>
<dbReference type="PDBsum" id="7JK1"/>
<dbReference type="PDBsum" id="7JKL"/>
<dbReference type="PDBsum" id="7JKP"/>
<dbReference type="PDBsum" id="7JL8"/>
<dbReference type="PDBsum" id="7JLG"/>
<dbReference type="SMR" id="Q96LW4"/>
<dbReference type="BioGRID" id="128410">
    <property type="interactions" value="24"/>
</dbReference>
<dbReference type="FunCoup" id="Q96LW4">
    <property type="interactions" value="2753"/>
</dbReference>
<dbReference type="IntAct" id="Q96LW4">
    <property type="interactions" value="18"/>
</dbReference>
<dbReference type="MINT" id="Q96LW4"/>
<dbReference type="STRING" id="9606.ENSP00000420860"/>
<dbReference type="GlyGen" id="Q96LW4">
    <property type="glycosylation" value="1 site, 1 O-linked glycan (1 site)"/>
</dbReference>
<dbReference type="iPTMnet" id="Q96LW4"/>
<dbReference type="PhosphoSitePlus" id="Q96LW4"/>
<dbReference type="BioMuta" id="PRIMPOL"/>
<dbReference type="DMDM" id="296434425"/>
<dbReference type="jPOST" id="Q96LW4"/>
<dbReference type="MassIVE" id="Q96LW4"/>
<dbReference type="PaxDb" id="9606-ENSP00000313816"/>
<dbReference type="PeptideAtlas" id="Q96LW4"/>
<dbReference type="ProteomicsDB" id="14139"/>
<dbReference type="ProteomicsDB" id="77258">
    <molecule id="Q96LW4-1"/>
</dbReference>
<dbReference type="Pumba" id="Q96LW4"/>
<dbReference type="Antibodypedia" id="66503">
    <property type="antibodies" value="34 antibodies from 9 providers"/>
</dbReference>
<dbReference type="DNASU" id="201973"/>
<dbReference type="Ensembl" id="ENST00000314970.11">
    <molecule id="Q96LW4-1"/>
    <property type="protein sequence ID" value="ENSP00000313816.6"/>
    <property type="gene ID" value="ENSG00000164306.11"/>
</dbReference>
<dbReference type="Ensembl" id="ENST00000503752.5">
    <molecule id="Q96LW4-1"/>
    <property type="protein sequence ID" value="ENSP00000420860.1"/>
    <property type="gene ID" value="ENSG00000164306.11"/>
</dbReference>
<dbReference type="Ensembl" id="ENST00000512834.5">
    <molecule id="Q96LW4-2"/>
    <property type="protein sequence ID" value="ENSP00000425316.1"/>
    <property type="gene ID" value="ENSG00000164306.11"/>
</dbReference>
<dbReference type="GeneID" id="201973"/>
<dbReference type="KEGG" id="hsa:201973"/>
<dbReference type="MANE-Select" id="ENST00000314970.11">
    <property type="protein sequence ID" value="ENSP00000313816.6"/>
    <property type="RefSeq nucleotide sequence ID" value="NM_152683.4"/>
    <property type="RefSeq protein sequence ID" value="NP_689896.1"/>
</dbReference>
<dbReference type="UCSC" id="uc003iwj.3">
    <property type="organism name" value="human"/>
</dbReference>
<dbReference type="UCSC" id="uc003iwk.3">
    <molecule id="Q96LW4-1"/>
    <property type="organism name" value="human"/>
</dbReference>
<dbReference type="AGR" id="HGNC:26575"/>
<dbReference type="CTD" id="201973"/>
<dbReference type="DisGeNET" id="201973"/>
<dbReference type="GeneCards" id="PRIMPOL"/>
<dbReference type="HGNC" id="HGNC:26575">
    <property type="gene designation" value="PRIMPOL"/>
</dbReference>
<dbReference type="HPA" id="ENSG00000164306">
    <property type="expression patterns" value="Low tissue specificity"/>
</dbReference>
<dbReference type="MalaCards" id="PRIMPOL"/>
<dbReference type="MIM" id="615420">
    <property type="type" value="phenotype"/>
</dbReference>
<dbReference type="MIM" id="615421">
    <property type="type" value="gene"/>
</dbReference>
<dbReference type="neXtProt" id="NX_Q96LW4"/>
<dbReference type="OpenTargets" id="ENSG00000164306"/>
<dbReference type="PharmGKB" id="PA145008751"/>
<dbReference type="VEuPathDB" id="HostDB:ENSG00000164306"/>
<dbReference type="eggNOG" id="ENOG502QS1Q">
    <property type="taxonomic scope" value="Eukaryota"/>
</dbReference>
<dbReference type="GeneTree" id="ENSGT00390000003901"/>
<dbReference type="InParanoid" id="Q96LW4"/>
<dbReference type="OMA" id="HYEVIQD"/>
<dbReference type="OrthoDB" id="5988181at2759"/>
<dbReference type="PAN-GO" id="Q96LW4">
    <property type="GO annotations" value="9 GO annotations based on evolutionary models"/>
</dbReference>
<dbReference type="PhylomeDB" id="Q96LW4"/>
<dbReference type="TreeFam" id="TF328961"/>
<dbReference type="BRENDA" id="2.7.7.102">
    <property type="organism ID" value="2681"/>
</dbReference>
<dbReference type="PathwayCommons" id="Q96LW4"/>
<dbReference type="SignaLink" id="Q96LW4"/>
<dbReference type="BioGRID-ORCS" id="201973">
    <property type="hits" value="11 hits in 1137 CRISPR screens"/>
</dbReference>
<dbReference type="ChiTaRS" id="PRIMPOL">
    <property type="organism name" value="human"/>
</dbReference>
<dbReference type="GenomeRNAi" id="201973"/>
<dbReference type="Pharos" id="Q96LW4">
    <property type="development level" value="Tbio"/>
</dbReference>
<dbReference type="PRO" id="PR:Q96LW4"/>
<dbReference type="Proteomes" id="UP000005640">
    <property type="component" value="Chromosome 4"/>
</dbReference>
<dbReference type="RNAct" id="Q96LW4">
    <property type="molecule type" value="protein"/>
</dbReference>
<dbReference type="Bgee" id="ENSG00000164306">
    <property type="expression patterns" value="Expressed in cerebellar hemisphere and 176 other cell types or tissues"/>
</dbReference>
<dbReference type="ExpressionAtlas" id="Q96LW4">
    <property type="expression patterns" value="baseline and differential"/>
</dbReference>
<dbReference type="GO" id="GO:0000428">
    <property type="term" value="C:DNA-directed RNA polymerase complex"/>
    <property type="evidence" value="ECO:0007669"/>
    <property type="project" value="UniProtKB-KW"/>
</dbReference>
<dbReference type="GO" id="GO:0005759">
    <property type="term" value="C:mitochondrial matrix"/>
    <property type="evidence" value="ECO:0000314"/>
    <property type="project" value="UniProtKB"/>
</dbReference>
<dbReference type="GO" id="GO:0005739">
    <property type="term" value="C:mitochondrion"/>
    <property type="evidence" value="ECO:0006056"/>
    <property type="project" value="FlyBase"/>
</dbReference>
<dbReference type="GO" id="GO:0005634">
    <property type="term" value="C:nucleus"/>
    <property type="evidence" value="ECO:0000314"/>
    <property type="project" value="UniProtKB"/>
</dbReference>
<dbReference type="GO" id="GO:0005657">
    <property type="term" value="C:replication fork"/>
    <property type="evidence" value="ECO:0000314"/>
    <property type="project" value="UniProtKB"/>
</dbReference>
<dbReference type="GO" id="GO:0003682">
    <property type="term" value="F:chromatin binding"/>
    <property type="evidence" value="ECO:0000314"/>
    <property type="project" value="UniProtKB"/>
</dbReference>
<dbReference type="GO" id="GO:0003887">
    <property type="term" value="F:DNA-directed DNA polymerase activity"/>
    <property type="evidence" value="ECO:0000314"/>
    <property type="project" value="UniProtKB"/>
</dbReference>
<dbReference type="GO" id="GO:0003899">
    <property type="term" value="F:DNA-directed RNA polymerase activity"/>
    <property type="evidence" value="ECO:0000314"/>
    <property type="project" value="UniProtKB"/>
</dbReference>
<dbReference type="GO" id="GO:0030145">
    <property type="term" value="F:manganese ion binding"/>
    <property type="evidence" value="ECO:0000314"/>
    <property type="project" value="UniProtKB"/>
</dbReference>
<dbReference type="GO" id="GO:0008270">
    <property type="term" value="F:zinc ion binding"/>
    <property type="evidence" value="ECO:0000314"/>
    <property type="project" value="UniProtKB"/>
</dbReference>
<dbReference type="GO" id="GO:0006269">
    <property type="term" value="P:DNA replication, synthesis of primer"/>
    <property type="evidence" value="ECO:0007669"/>
    <property type="project" value="InterPro"/>
</dbReference>
<dbReference type="GO" id="GO:0042276">
    <property type="term" value="P:error-prone translesion synthesis"/>
    <property type="evidence" value="ECO:0000314"/>
    <property type="project" value="UniProtKB"/>
</dbReference>
<dbReference type="GO" id="GO:0043504">
    <property type="term" value="P:mitochondrial DNA repair"/>
    <property type="evidence" value="ECO:0000250"/>
    <property type="project" value="UniProtKB"/>
</dbReference>
<dbReference type="GO" id="GO:0006264">
    <property type="term" value="P:mitochondrial DNA replication"/>
    <property type="evidence" value="ECO:0000315"/>
    <property type="project" value="UniProtKB"/>
</dbReference>
<dbReference type="GO" id="GO:0062176">
    <property type="term" value="P:R-loop processing"/>
    <property type="evidence" value="ECO:0000314"/>
    <property type="project" value="UniProtKB"/>
</dbReference>
<dbReference type="GO" id="GO:0031297">
    <property type="term" value="P:replication fork processing"/>
    <property type="evidence" value="ECO:0000314"/>
    <property type="project" value="UniProtKB"/>
</dbReference>
<dbReference type="GO" id="GO:0009411">
    <property type="term" value="P:response to UV"/>
    <property type="evidence" value="ECO:0000314"/>
    <property type="project" value="UniProtKB"/>
</dbReference>
<dbReference type="GO" id="GO:0019985">
    <property type="term" value="P:translesion synthesis"/>
    <property type="evidence" value="ECO:0000315"/>
    <property type="project" value="UniProtKB"/>
</dbReference>
<dbReference type="CDD" id="cd22256">
    <property type="entry name" value="PrimPol_RBD"/>
    <property type="match status" value="1"/>
</dbReference>
<dbReference type="InterPro" id="IPR002755">
    <property type="entry name" value="DNA_primase_S"/>
</dbReference>
<dbReference type="InterPro" id="IPR044917">
    <property type="entry name" value="PRIMPOL"/>
</dbReference>
<dbReference type="PANTHER" id="PTHR31399">
    <property type="entry name" value="DNA-DIRECTED PRIMASE / POLYMERASE PROTEIN"/>
    <property type="match status" value="1"/>
</dbReference>
<dbReference type="PANTHER" id="PTHR31399:SF0">
    <property type="entry name" value="DNA-DIRECTED PRIMASE_POLYMERASE PROTEIN"/>
    <property type="match status" value="1"/>
</dbReference>
<dbReference type="Pfam" id="PF01896">
    <property type="entry name" value="DNA_primase_S"/>
    <property type="match status" value="1"/>
</dbReference>
<dbReference type="Pfam" id="PF03121">
    <property type="entry name" value="Herpes_UL52"/>
    <property type="match status" value="1"/>
</dbReference>
<keyword id="KW-0002">3D-structure</keyword>
<keyword id="KW-0025">Alternative splicing</keyword>
<keyword id="KW-0158">Chromosome</keyword>
<keyword id="KW-0175">Coiled coil</keyword>
<keyword id="KW-0225">Disease variant</keyword>
<keyword id="KW-0227">DNA damage</keyword>
<keyword id="KW-0234">DNA repair</keyword>
<keyword id="KW-0239">DNA-directed DNA polymerase</keyword>
<keyword id="KW-0240">DNA-directed RNA polymerase</keyword>
<keyword id="KW-0464">Manganese</keyword>
<keyword id="KW-0479">Metal-binding</keyword>
<keyword id="KW-0496">Mitochondrion</keyword>
<keyword id="KW-0548">Nucleotidyltransferase</keyword>
<keyword id="KW-0539">Nucleus</keyword>
<keyword id="KW-0597">Phosphoprotein</keyword>
<keyword id="KW-1267">Proteomics identification</keyword>
<keyword id="KW-1185">Reference proteome</keyword>
<keyword id="KW-0804">Transcription</keyword>
<keyword id="KW-0808">Transferase</keyword>
<keyword id="KW-0862">Zinc</keyword>